<keyword id="KW-1185">Reference proteome</keyword>
<keyword id="KW-0687">Ribonucleoprotein</keyword>
<keyword id="KW-0689">Ribosomal protein</keyword>
<name>RL32_CLOPE</name>
<sequence>MGNPARKTFRAKRDSRRAQTFKASLPGIVECPQCHEMKMAHRVCKNCGHYKGKEVVSVEE</sequence>
<organism>
    <name type="scientific">Clostridium perfringens (strain 13 / Type A)</name>
    <dbReference type="NCBI Taxonomy" id="195102"/>
    <lineage>
        <taxon>Bacteria</taxon>
        <taxon>Bacillati</taxon>
        <taxon>Bacillota</taxon>
        <taxon>Clostridia</taxon>
        <taxon>Eubacteriales</taxon>
        <taxon>Clostridiaceae</taxon>
        <taxon>Clostridium</taxon>
    </lineage>
</organism>
<comment type="similarity">
    <text evidence="1">Belongs to the bacterial ribosomal protein bL32 family.</text>
</comment>
<evidence type="ECO:0000255" key="1">
    <source>
        <dbReference type="HAMAP-Rule" id="MF_00340"/>
    </source>
</evidence>
<evidence type="ECO:0000305" key="2"/>
<accession>Q8XJN4</accession>
<feature type="chain" id="PRO_0000172332" description="Large ribosomal subunit protein bL32">
    <location>
        <begin position="1"/>
        <end position="60"/>
    </location>
</feature>
<reference key="1">
    <citation type="journal article" date="2002" name="Proc. Natl. Acad. Sci. U.S.A.">
        <title>Complete genome sequence of Clostridium perfringens, an anaerobic flesh-eater.</title>
        <authorList>
            <person name="Shimizu T."/>
            <person name="Ohtani K."/>
            <person name="Hirakawa H."/>
            <person name="Ohshima K."/>
            <person name="Yamashita A."/>
            <person name="Shiba T."/>
            <person name="Ogasawara N."/>
            <person name="Hattori M."/>
            <person name="Kuhara S."/>
            <person name="Hayashi H."/>
        </authorList>
    </citation>
    <scope>NUCLEOTIDE SEQUENCE [LARGE SCALE GENOMIC DNA]</scope>
    <source>
        <strain>13 / Type A</strain>
    </source>
</reference>
<gene>
    <name evidence="1" type="primary">rpmF</name>
    <name type="ordered locus">CPE1722</name>
</gene>
<protein>
    <recommendedName>
        <fullName evidence="1">Large ribosomal subunit protein bL32</fullName>
    </recommendedName>
    <alternativeName>
        <fullName evidence="2">50S ribosomal protein L32</fullName>
    </alternativeName>
</protein>
<dbReference type="EMBL" id="BA000016">
    <property type="protein sequence ID" value="BAB81428.1"/>
    <property type="molecule type" value="Genomic_DNA"/>
</dbReference>
<dbReference type="RefSeq" id="WP_003449428.1">
    <property type="nucleotide sequence ID" value="NC_003366.1"/>
</dbReference>
<dbReference type="SMR" id="Q8XJN4"/>
<dbReference type="STRING" id="195102.gene:10490986"/>
<dbReference type="GeneID" id="93001741"/>
<dbReference type="KEGG" id="cpe:CPE1722"/>
<dbReference type="HOGENOM" id="CLU_129084_1_3_9"/>
<dbReference type="Proteomes" id="UP000000818">
    <property type="component" value="Chromosome"/>
</dbReference>
<dbReference type="GO" id="GO:0015934">
    <property type="term" value="C:large ribosomal subunit"/>
    <property type="evidence" value="ECO:0007669"/>
    <property type="project" value="InterPro"/>
</dbReference>
<dbReference type="GO" id="GO:0003735">
    <property type="term" value="F:structural constituent of ribosome"/>
    <property type="evidence" value="ECO:0007669"/>
    <property type="project" value="InterPro"/>
</dbReference>
<dbReference type="GO" id="GO:0006412">
    <property type="term" value="P:translation"/>
    <property type="evidence" value="ECO:0007669"/>
    <property type="project" value="UniProtKB-UniRule"/>
</dbReference>
<dbReference type="HAMAP" id="MF_00340">
    <property type="entry name" value="Ribosomal_bL32"/>
    <property type="match status" value="1"/>
</dbReference>
<dbReference type="InterPro" id="IPR002677">
    <property type="entry name" value="Ribosomal_bL32"/>
</dbReference>
<dbReference type="InterPro" id="IPR044957">
    <property type="entry name" value="Ribosomal_bL32_bact"/>
</dbReference>
<dbReference type="InterPro" id="IPR011332">
    <property type="entry name" value="Ribosomal_zn-bd"/>
</dbReference>
<dbReference type="NCBIfam" id="TIGR01031">
    <property type="entry name" value="rpmF_bact"/>
    <property type="match status" value="1"/>
</dbReference>
<dbReference type="PANTHER" id="PTHR35534">
    <property type="entry name" value="50S RIBOSOMAL PROTEIN L32"/>
    <property type="match status" value="1"/>
</dbReference>
<dbReference type="PANTHER" id="PTHR35534:SF2">
    <property type="entry name" value="LARGE RIBOSOMAL SUBUNIT PROTEIN BL32"/>
    <property type="match status" value="1"/>
</dbReference>
<dbReference type="Pfam" id="PF01783">
    <property type="entry name" value="Ribosomal_L32p"/>
    <property type="match status" value="1"/>
</dbReference>
<dbReference type="SUPFAM" id="SSF57829">
    <property type="entry name" value="Zn-binding ribosomal proteins"/>
    <property type="match status" value="1"/>
</dbReference>
<proteinExistence type="inferred from homology"/>